<feature type="chain" id="PRO_0000047419" description="Zinc finger protein 135">
    <location>
        <begin position="1"/>
        <end position="658"/>
    </location>
</feature>
<feature type="domain" description="KRAB" evidence="2">
    <location>
        <begin position="14"/>
        <end position="85"/>
    </location>
</feature>
<feature type="zinc finger region" description="C2H2-type 1" evidence="1">
    <location>
        <begin position="214"/>
        <end position="236"/>
    </location>
</feature>
<feature type="zinc finger region" description="C2H2-type 2" evidence="1">
    <location>
        <begin position="242"/>
        <end position="264"/>
    </location>
</feature>
<feature type="zinc finger region" description="C2H2-type 3" evidence="1">
    <location>
        <begin position="270"/>
        <end position="292"/>
    </location>
</feature>
<feature type="zinc finger region" description="C2H2-type 4" evidence="1">
    <location>
        <begin position="298"/>
        <end position="320"/>
    </location>
</feature>
<feature type="zinc finger region" description="C2H2-type 5" evidence="1">
    <location>
        <begin position="326"/>
        <end position="348"/>
    </location>
</feature>
<feature type="zinc finger region" description="C2H2-type 6" evidence="1">
    <location>
        <begin position="354"/>
        <end position="376"/>
    </location>
</feature>
<feature type="zinc finger region" description="C2H2-type 7" evidence="1">
    <location>
        <begin position="382"/>
        <end position="404"/>
    </location>
</feature>
<feature type="zinc finger region" description="C2H2-type 8" evidence="1">
    <location>
        <begin position="410"/>
        <end position="432"/>
    </location>
</feature>
<feature type="zinc finger region" description="C2H2-type 9" evidence="1">
    <location>
        <begin position="438"/>
        <end position="460"/>
    </location>
</feature>
<feature type="zinc finger region" description="C2H2-type 10" evidence="1">
    <location>
        <begin position="466"/>
        <end position="488"/>
    </location>
</feature>
<feature type="zinc finger region" description="C2H2-type 11" evidence="1">
    <location>
        <begin position="494"/>
        <end position="516"/>
    </location>
</feature>
<feature type="zinc finger region" description="C2H2-type 12" evidence="1">
    <location>
        <begin position="522"/>
        <end position="544"/>
    </location>
</feature>
<feature type="zinc finger region" description="C2H2-type 13" evidence="1">
    <location>
        <begin position="550"/>
        <end position="572"/>
    </location>
</feature>
<feature type="zinc finger region" description="C2H2-type 14" evidence="1">
    <location>
        <begin position="578"/>
        <end position="600"/>
    </location>
</feature>
<feature type="zinc finger region" description="C2H2-type 15" evidence="1">
    <location>
        <begin position="606"/>
        <end position="628"/>
    </location>
</feature>
<feature type="zinc finger region" description="C2H2-type 16" evidence="1">
    <location>
        <begin position="634"/>
        <end position="656"/>
    </location>
</feature>
<feature type="region of interest" description="Disordered" evidence="3">
    <location>
        <begin position="171"/>
        <end position="196"/>
    </location>
</feature>
<feature type="splice variant" id="VSP_046073" description="In isoform 2 and isoform 4." evidence="7">
    <original>MTPGVRVSTDP</original>
    <variation>MELGSRRRSVGCRCRGLCLAVRR</variation>
    <location>
        <begin position="1"/>
        <end position="11"/>
    </location>
</feature>
<feature type="splice variant" id="VSP_046706" description="In isoform 3 and isoform 4." evidence="7">
    <original>P</original>
    <variation>PEIKGHFQFLLLS</variation>
    <location>
        <position position="85"/>
    </location>
</feature>
<feature type="splice variant" id="VSP_046074" description="In isoform 2." evidence="7">
    <location>
        <begin position="359"/>
        <end position="638"/>
    </location>
</feature>
<feature type="sequence variant" id="VAR_052774" description="In dbSNP:rs1469087." evidence="4 5">
    <original>G</original>
    <variation>D</variation>
    <location>
        <position position="22"/>
    </location>
</feature>
<feature type="sequence variant" id="VAR_052775" description="In dbSNP:rs2228277.">
    <original>S</original>
    <variation>L</variation>
    <location>
        <position position="507"/>
    </location>
</feature>
<feature type="sequence variant" id="VAR_052776" description="In dbSNP:rs2228278.">
    <original>T</original>
    <variation>A</variation>
    <location>
        <position position="517"/>
    </location>
</feature>
<feature type="sequence variant" id="VAR_052777" description="In dbSNP:rs2228279.">
    <original>G</original>
    <variation>R</variation>
    <location>
        <position position="579"/>
    </location>
</feature>
<feature type="sequence variant" id="VAR_052778" description="In dbSNP:rs2228275.">
    <original>S</original>
    <variation>L</variation>
    <location>
        <position position="592"/>
    </location>
</feature>
<feature type="sequence conflict" description="In Ref. 5; AAC50254." evidence="8" ref="5">
    <original>G</original>
    <variation>R</variation>
    <location>
        <position position="166"/>
    </location>
</feature>
<feature type="sequence conflict" description="In Ref. 1; BAG58141." evidence="8" ref="1">
    <original>C</original>
    <variation>F</variation>
    <location>
        <position position="247"/>
    </location>
</feature>
<feature type="sequence conflict" description="In Ref. 1; BAG58141." evidence="8" ref="1">
    <original>S</original>
    <variation>C</variation>
    <location>
        <position position="308"/>
    </location>
</feature>
<keyword id="KW-0025">Alternative splicing</keyword>
<keyword id="KW-0238">DNA-binding</keyword>
<keyword id="KW-0479">Metal-binding</keyword>
<keyword id="KW-0539">Nucleus</keyword>
<keyword id="KW-1267">Proteomics identification</keyword>
<keyword id="KW-1185">Reference proteome</keyword>
<keyword id="KW-0677">Repeat</keyword>
<keyword id="KW-0804">Transcription</keyword>
<keyword id="KW-0805">Transcription regulation</keyword>
<keyword id="KW-0862">Zinc</keyword>
<keyword id="KW-0863">Zinc-finger</keyword>
<sequence>MTPGVRVSTDPEQVTFEDVVVGFSQEEWGQLKPAQRTLYRDVMLDTFRLLVSVGHWLPKPNVISLLEQEAELWAVESRLPQGVYPDLETRPKVKLSVLKQGISEEISNSVILVERFLWDGLWYCRGEDTEGHWEWSCESLESLAVPVAFTPVKTPVLEQWQRNGFGENISLNPDLPHQPMTPERQSPHTWGTRGKREKPDLNVLQKTCVKEKPYKCQECGKAFSHSSALIEHHRTHTGERPYECHECLKGFRNSSALTKHQRIHTGEKPYKCTQCGRTFNQIAPLIQHQRTHTGEKPYECSECGKSFSFRSSFSQHERTHTGEKPYECSECGKAFRQSIHLTQHLRIHTGEKPYQCGECGKAFSHSSSLTKHQRIHTGEKPYECHECGKAFTQITPLIQHQRTHTGEKPYECGECGKAFSQSTLLTEHRRIHTGEKPYGCNECGKTFSHSSSLSQHERTHTGEKPYECSQCGKAFRQSTHLTQHQRIHTGEKPYECNDCGKAFSHSSSLTKHQRIHTGEKPYECNQCGRAFSQLAPLIQHQRIHTGEKPYECNQCGRAFSQSSLLIEHQRIHTKEKPYGCNECGKSFSHSSSLSQHERTHTGEKPYECHDCGKSFRQSTHLTQHRRIHTGEKPYACRDCGKAFTHSSSLTKHQRTHTG</sequence>
<dbReference type="EMBL" id="AK098011">
    <property type="protein sequence ID" value="BAC05214.1"/>
    <property type="molecule type" value="mRNA"/>
</dbReference>
<dbReference type="EMBL" id="AK295110">
    <property type="protein sequence ID" value="BAG58141.1"/>
    <property type="molecule type" value="mRNA"/>
</dbReference>
<dbReference type="EMBL" id="AC008751">
    <property type="status" value="NOT_ANNOTATED_CDS"/>
    <property type="molecule type" value="Genomic_DNA"/>
</dbReference>
<dbReference type="EMBL" id="CH471135">
    <property type="protein sequence ID" value="EAW72553.1"/>
    <property type="molecule type" value="Genomic_DNA"/>
</dbReference>
<dbReference type="EMBL" id="BC046434">
    <property type="protein sequence ID" value="AAH46434.1"/>
    <property type="molecule type" value="mRNA"/>
</dbReference>
<dbReference type="EMBL" id="U09413">
    <property type="protein sequence ID" value="AAC50254.1"/>
    <property type="status" value="ALT_FRAME"/>
    <property type="molecule type" value="mRNA"/>
</dbReference>
<dbReference type="CCDS" id="CCDS12970.2">
    <molecule id="P52742-3"/>
</dbReference>
<dbReference type="CCDS" id="CCDS54329.1">
    <molecule id="P52742-4"/>
</dbReference>
<dbReference type="CCDS" id="CCDS54330.1">
    <molecule id="P52742-2"/>
</dbReference>
<dbReference type="CCDS" id="CCDS74471.1">
    <molecule id="P52742-1"/>
</dbReference>
<dbReference type="PIR" id="I38600">
    <property type="entry name" value="I38600"/>
</dbReference>
<dbReference type="RefSeq" id="NP_001158001.1">
    <property type="nucleotide sequence ID" value="NM_001164529.1"/>
</dbReference>
<dbReference type="RefSeq" id="NP_001158002.1">
    <molecule id="P52742-2"/>
    <property type="nucleotide sequence ID" value="NM_001164530.1"/>
</dbReference>
<dbReference type="RefSeq" id="NP_001276330.1">
    <molecule id="P52742-1"/>
    <property type="nucleotide sequence ID" value="NM_001289401.2"/>
</dbReference>
<dbReference type="RefSeq" id="NP_001276331.1">
    <property type="nucleotide sequence ID" value="NM_001289402.1"/>
</dbReference>
<dbReference type="RefSeq" id="NP_003427.3">
    <molecule id="P52742-3"/>
    <property type="nucleotide sequence ID" value="NM_003436.3"/>
</dbReference>
<dbReference type="RefSeq" id="NP_009065.1">
    <molecule id="P52742-4"/>
    <property type="nucleotide sequence ID" value="NM_007134.1"/>
</dbReference>
<dbReference type="RefSeq" id="XP_006723425.1">
    <molecule id="P52742-3"/>
    <property type="nucleotide sequence ID" value="XM_006723362.5"/>
</dbReference>
<dbReference type="RefSeq" id="XP_006723426.1">
    <molecule id="P52742-3"/>
    <property type="nucleotide sequence ID" value="XM_006723363.4"/>
</dbReference>
<dbReference type="RefSeq" id="XP_016882729.1">
    <property type="nucleotide sequence ID" value="XM_017027240.1"/>
</dbReference>
<dbReference type="RefSeq" id="XP_047295318.1">
    <molecule id="P52742-1"/>
    <property type="nucleotide sequence ID" value="XM_047439362.1"/>
</dbReference>
<dbReference type="RefSeq" id="XP_047295319.1">
    <molecule id="P52742-1"/>
    <property type="nucleotide sequence ID" value="XM_047439363.1"/>
</dbReference>
<dbReference type="SMR" id="P52742"/>
<dbReference type="BioGRID" id="113489">
    <property type="interactions" value="10"/>
</dbReference>
<dbReference type="FunCoup" id="P52742">
    <property type="interactions" value="5"/>
</dbReference>
<dbReference type="IntAct" id="P52742">
    <property type="interactions" value="11"/>
</dbReference>
<dbReference type="MINT" id="P52742"/>
<dbReference type="STRING" id="9606.ENSP00000441410"/>
<dbReference type="GlyGen" id="P52742">
    <property type="glycosylation" value="1 site, 1 O-linked glycan (1 site)"/>
</dbReference>
<dbReference type="iPTMnet" id="P52742"/>
<dbReference type="PhosphoSitePlus" id="P52742"/>
<dbReference type="BioMuta" id="ZNF135"/>
<dbReference type="DMDM" id="296453071"/>
<dbReference type="jPOST" id="P52742"/>
<dbReference type="MassIVE" id="P52742"/>
<dbReference type="PaxDb" id="9606-ENSP00000441410"/>
<dbReference type="PeptideAtlas" id="P52742"/>
<dbReference type="ProteomicsDB" id="19965"/>
<dbReference type="ProteomicsDB" id="24883"/>
<dbReference type="ProteomicsDB" id="46318"/>
<dbReference type="ProteomicsDB" id="56518">
    <molecule id="P52742-1"/>
</dbReference>
<dbReference type="Antibodypedia" id="1840">
    <property type="antibodies" value="70 antibodies from 15 providers"/>
</dbReference>
<dbReference type="DNASU" id="7694"/>
<dbReference type="Ensembl" id="ENST00000313434.10">
    <molecule id="P52742-1"/>
    <property type="protein sequence ID" value="ENSP00000321406.5"/>
    <property type="gene ID" value="ENSG00000176293.20"/>
</dbReference>
<dbReference type="Ensembl" id="ENST00000359978.10">
    <molecule id="P52742-2"/>
    <property type="protein sequence ID" value="ENSP00000369437.4"/>
    <property type="gene ID" value="ENSG00000176293.20"/>
</dbReference>
<dbReference type="Ensembl" id="ENST00000401053.8">
    <molecule id="P52742-4"/>
    <property type="protein sequence ID" value="ENSP00000441410.1"/>
    <property type="gene ID" value="ENSG00000176293.20"/>
</dbReference>
<dbReference type="Ensembl" id="ENST00000511556.5">
    <molecule id="P52742-3"/>
    <property type="protein sequence ID" value="ENSP00000422074.1"/>
    <property type="gene ID" value="ENSG00000176293.20"/>
</dbReference>
<dbReference type="GeneID" id="7694"/>
<dbReference type="KEGG" id="hsa:7694"/>
<dbReference type="MANE-Select" id="ENST00000313434.10">
    <property type="protein sequence ID" value="ENSP00000321406.5"/>
    <property type="RefSeq nucleotide sequence ID" value="NM_001289401.2"/>
    <property type="RefSeq protein sequence ID" value="NP_001276330.1"/>
</dbReference>
<dbReference type="UCSC" id="uc002qrd.3">
    <molecule id="P52742-1"/>
    <property type="organism name" value="human"/>
</dbReference>
<dbReference type="AGR" id="HGNC:12919"/>
<dbReference type="CTD" id="7694"/>
<dbReference type="DisGeNET" id="7694"/>
<dbReference type="GeneCards" id="ZNF135"/>
<dbReference type="HGNC" id="HGNC:12919">
    <property type="gene designation" value="ZNF135"/>
</dbReference>
<dbReference type="HPA" id="ENSG00000176293">
    <property type="expression patterns" value="Low tissue specificity"/>
</dbReference>
<dbReference type="MIM" id="604077">
    <property type="type" value="gene"/>
</dbReference>
<dbReference type="neXtProt" id="NX_P52742"/>
<dbReference type="OpenTargets" id="ENSG00000176293"/>
<dbReference type="PharmGKB" id="PA37507"/>
<dbReference type="VEuPathDB" id="HostDB:ENSG00000176293"/>
<dbReference type="eggNOG" id="KOG1721">
    <property type="taxonomic scope" value="Eukaryota"/>
</dbReference>
<dbReference type="GeneTree" id="ENSGT00940000153104"/>
<dbReference type="HOGENOM" id="CLU_002678_44_0_1"/>
<dbReference type="InParanoid" id="P52742"/>
<dbReference type="OMA" id="HWLPKPD"/>
<dbReference type="OrthoDB" id="9411774at2759"/>
<dbReference type="PAN-GO" id="P52742">
    <property type="GO annotations" value="4 GO annotations based on evolutionary models"/>
</dbReference>
<dbReference type="PhylomeDB" id="P52742"/>
<dbReference type="TreeFam" id="TF350822"/>
<dbReference type="PathwayCommons" id="P52742"/>
<dbReference type="Reactome" id="R-HSA-212436">
    <property type="pathway name" value="Generic Transcription Pathway"/>
</dbReference>
<dbReference type="SignaLink" id="P52742"/>
<dbReference type="BioGRID-ORCS" id="7694">
    <property type="hits" value="13 hits in 1168 CRISPR screens"/>
</dbReference>
<dbReference type="GenomeRNAi" id="7694"/>
<dbReference type="Pharos" id="P52742">
    <property type="development level" value="Tbio"/>
</dbReference>
<dbReference type="PRO" id="PR:P52742"/>
<dbReference type="Proteomes" id="UP000005640">
    <property type="component" value="Chromosome 19"/>
</dbReference>
<dbReference type="RNAct" id="P52742">
    <property type="molecule type" value="protein"/>
</dbReference>
<dbReference type="Bgee" id="ENSG00000176293">
    <property type="expression patterns" value="Expressed in primordial germ cell in gonad and 114 other cell types or tissues"/>
</dbReference>
<dbReference type="ExpressionAtlas" id="P52742">
    <property type="expression patterns" value="baseline and differential"/>
</dbReference>
<dbReference type="GO" id="GO:0005634">
    <property type="term" value="C:nucleus"/>
    <property type="evidence" value="ECO:0000318"/>
    <property type="project" value="GO_Central"/>
</dbReference>
<dbReference type="GO" id="GO:0000981">
    <property type="term" value="F:DNA-binding transcription factor activity, RNA polymerase II-specific"/>
    <property type="evidence" value="ECO:0000318"/>
    <property type="project" value="GO_Central"/>
</dbReference>
<dbReference type="GO" id="GO:0000978">
    <property type="term" value="F:RNA polymerase II cis-regulatory region sequence-specific DNA binding"/>
    <property type="evidence" value="ECO:0000318"/>
    <property type="project" value="GO_Central"/>
</dbReference>
<dbReference type="GO" id="GO:0008270">
    <property type="term" value="F:zinc ion binding"/>
    <property type="evidence" value="ECO:0007669"/>
    <property type="project" value="UniProtKB-KW"/>
</dbReference>
<dbReference type="GO" id="GO:0007010">
    <property type="term" value="P:cytoskeleton organization"/>
    <property type="evidence" value="ECO:0000315"/>
    <property type="project" value="UniProtKB"/>
</dbReference>
<dbReference type="GO" id="GO:0022604">
    <property type="term" value="P:regulation of cell morphogenesis"/>
    <property type="evidence" value="ECO:0000315"/>
    <property type="project" value="UniProtKB"/>
</dbReference>
<dbReference type="GO" id="GO:0006357">
    <property type="term" value="P:regulation of transcription by RNA polymerase II"/>
    <property type="evidence" value="ECO:0000318"/>
    <property type="project" value="GO_Central"/>
</dbReference>
<dbReference type="CDD" id="cd07765">
    <property type="entry name" value="KRAB_A-box"/>
    <property type="match status" value="1"/>
</dbReference>
<dbReference type="FunFam" id="3.30.160.60:FF:001373">
    <property type="entry name" value="Zinc finger protein 135"/>
    <property type="match status" value="1"/>
</dbReference>
<dbReference type="FunFam" id="3.30.160.60:FF:000631">
    <property type="entry name" value="zinc finger protein 189 isoform X2"/>
    <property type="match status" value="1"/>
</dbReference>
<dbReference type="FunFam" id="3.30.160.60:FF:000295">
    <property type="entry name" value="zinc finger protein 19"/>
    <property type="match status" value="1"/>
</dbReference>
<dbReference type="FunFam" id="3.30.160.60:FF:002343">
    <property type="entry name" value="Zinc finger protein 33A"/>
    <property type="match status" value="2"/>
</dbReference>
<dbReference type="FunFam" id="3.30.160.60:FF:000690">
    <property type="entry name" value="Zinc finger protein 354C"/>
    <property type="match status" value="1"/>
</dbReference>
<dbReference type="FunFam" id="3.30.160.60:FF:001498">
    <property type="entry name" value="Zinc finger protein 404"/>
    <property type="match status" value="1"/>
</dbReference>
<dbReference type="FunFam" id="3.30.160.60:FF:002090">
    <property type="entry name" value="Zinc finger protein 473"/>
    <property type="match status" value="2"/>
</dbReference>
<dbReference type="FunFam" id="3.30.160.60:FF:002254">
    <property type="entry name" value="Zinc finger protein 540"/>
    <property type="match status" value="3"/>
</dbReference>
<dbReference type="FunFam" id="3.30.160.60:FF:000737">
    <property type="entry name" value="Zinc finger protein 565"/>
    <property type="match status" value="3"/>
</dbReference>
<dbReference type="FunFam" id="3.30.160.60:FF:000427">
    <property type="entry name" value="Zinc finger with KRAB and SCAN domains 7"/>
    <property type="match status" value="1"/>
</dbReference>
<dbReference type="Gene3D" id="6.10.140.140">
    <property type="match status" value="1"/>
</dbReference>
<dbReference type="Gene3D" id="3.30.160.60">
    <property type="entry name" value="Classic Zinc Finger"/>
    <property type="match status" value="16"/>
</dbReference>
<dbReference type="InterPro" id="IPR001909">
    <property type="entry name" value="KRAB"/>
</dbReference>
<dbReference type="InterPro" id="IPR036051">
    <property type="entry name" value="KRAB_dom_sf"/>
</dbReference>
<dbReference type="InterPro" id="IPR036236">
    <property type="entry name" value="Znf_C2H2_sf"/>
</dbReference>
<dbReference type="InterPro" id="IPR013087">
    <property type="entry name" value="Znf_C2H2_type"/>
</dbReference>
<dbReference type="PANTHER" id="PTHR24376">
    <property type="entry name" value="ZINC FINGER PROTEIN"/>
    <property type="match status" value="1"/>
</dbReference>
<dbReference type="PANTHER" id="PTHR24376:SF211">
    <property type="entry name" value="ZINC FINGER PROTEIN 606"/>
    <property type="match status" value="1"/>
</dbReference>
<dbReference type="Pfam" id="PF01352">
    <property type="entry name" value="KRAB"/>
    <property type="match status" value="1"/>
</dbReference>
<dbReference type="Pfam" id="PF00096">
    <property type="entry name" value="zf-C2H2"/>
    <property type="match status" value="16"/>
</dbReference>
<dbReference type="SMART" id="SM00349">
    <property type="entry name" value="KRAB"/>
    <property type="match status" value="1"/>
</dbReference>
<dbReference type="SMART" id="SM00355">
    <property type="entry name" value="ZnF_C2H2"/>
    <property type="match status" value="16"/>
</dbReference>
<dbReference type="SUPFAM" id="SSF57667">
    <property type="entry name" value="beta-beta-alpha zinc fingers"/>
    <property type="match status" value="10"/>
</dbReference>
<dbReference type="SUPFAM" id="SSF109640">
    <property type="entry name" value="KRAB domain (Kruppel-associated box)"/>
    <property type="match status" value="1"/>
</dbReference>
<dbReference type="PROSITE" id="PS50805">
    <property type="entry name" value="KRAB"/>
    <property type="match status" value="1"/>
</dbReference>
<dbReference type="PROSITE" id="PS00028">
    <property type="entry name" value="ZINC_FINGER_C2H2_1"/>
    <property type="match status" value="16"/>
</dbReference>
<dbReference type="PROSITE" id="PS50157">
    <property type="entry name" value="ZINC_FINGER_C2H2_2"/>
    <property type="match status" value="16"/>
</dbReference>
<accession>P52742</accession>
<accession>B4DHH9</accession>
<accession>E9PEV2</accession>
<accession>F5GYY9</accession>
<accession>I3L0B3</accession>
<accession>Q5U5L3</accession>
<accession>Q8N1I7</accession>
<evidence type="ECO:0000255" key="1">
    <source>
        <dbReference type="PROSITE-ProRule" id="PRU00042"/>
    </source>
</evidence>
<evidence type="ECO:0000255" key="2">
    <source>
        <dbReference type="PROSITE-ProRule" id="PRU00119"/>
    </source>
</evidence>
<evidence type="ECO:0000256" key="3">
    <source>
        <dbReference type="SAM" id="MobiDB-lite"/>
    </source>
</evidence>
<evidence type="ECO:0000269" key="4">
    <source>
    </source>
</evidence>
<evidence type="ECO:0000269" key="5">
    <source>
    </source>
</evidence>
<evidence type="ECO:0000269" key="6">
    <source>
    </source>
</evidence>
<evidence type="ECO:0000303" key="7">
    <source>
    </source>
</evidence>
<evidence type="ECO:0000305" key="8"/>
<comment type="function">
    <text evidence="6">Plays a role in the regulation of cell morphology and cytoskeletal organization. May be involved in transcriptional regulation.</text>
</comment>
<comment type="interaction">
    <interactant intactId="EBI-7101455">
        <id>P52742</id>
    </interactant>
    <interactant intactId="EBI-11954519">
        <id>Q49AR9</id>
        <label>ANKS1A</label>
    </interactant>
    <organismsDiffer>false</organismsDiffer>
    <experiments>3</experiments>
</comment>
<comment type="interaction">
    <interactant intactId="EBI-7101455">
        <id>P52742</id>
    </interactant>
    <interactant intactId="EBI-2798728">
        <id>P61968</id>
        <label>LMO4</label>
    </interactant>
    <organismsDiffer>false</organismsDiffer>
    <experiments>3</experiments>
</comment>
<comment type="interaction">
    <interactant intactId="EBI-7101455">
        <id>P52742</id>
    </interactant>
    <interactant intactId="EBI-748391">
        <id>Q9BWG6</id>
        <label>SCNM1</label>
    </interactant>
    <organismsDiffer>false</organismsDiffer>
    <experiments>3</experiments>
</comment>
<comment type="interaction">
    <interactant intactId="EBI-7101455">
        <id>P52742</id>
    </interactant>
    <interactant intactId="EBI-12040603">
        <id>Q9NZC7-5</id>
        <label>WWOX</label>
    </interactant>
    <organismsDiffer>false</organismsDiffer>
    <experiments>3</experiments>
</comment>
<comment type="subcellular location">
    <subcellularLocation>
        <location evidence="8">Nucleus</location>
    </subcellularLocation>
</comment>
<comment type="alternative products">
    <event type="alternative splicing"/>
    <isoform>
        <id>P52742-1</id>
        <name>1</name>
        <sequence type="displayed"/>
    </isoform>
    <isoform>
        <id>P52742-2</id>
        <name>2</name>
        <sequence type="described" ref="VSP_046073 VSP_046074"/>
    </isoform>
    <isoform>
        <id>P52742-3</id>
        <name>3</name>
        <sequence type="described" ref="VSP_046706"/>
    </isoform>
    <isoform>
        <id>P52742-4</id>
        <name>4</name>
        <sequence type="described" ref="VSP_046073 VSP_046706"/>
    </isoform>
</comment>
<comment type="miscellaneous">
    <molecule>Isoform 3</molecule>
    <text evidence="8">May be due to competing acceptor splice site.</text>
</comment>
<comment type="similarity">
    <text evidence="8">Belongs to the krueppel C2H2-type zinc-finger protein family.</text>
</comment>
<comment type="sequence caution" evidence="8">
    <conflict type="frameshift">
        <sequence resource="EMBL-CDS" id="AAC50254"/>
    </conflict>
</comment>
<gene>
    <name type="primary">ZNF135</name>
    <name type="synonym">ZNF61</name>
    <name type="synonym">ZNF78L1</name>
</gene>
<proteinExistence type="evidence at protein level"/>
<protein>
    <recommendedName>
        <fullName>Zinc finger protein 135</fullName>
    </recommendedName>
    <alternativeName>
        <fullName>Zinc finger protein 61</fullName>
    </alternativeName>
    <alternativeName>
        <fullName>Zinc finger protein 78-like 1</fullName>
    </alternativeName>
</protein>
<organism>
    <name type="scientific">Homo sapiens</name>
    <name type="common">Human</name>
    <dbReference type="NCBI Taxonomy" id="9606"/>
    <lineage>
        <taxon>Eukaryota</taxon>
        <taxon>Metazoa</taxon>
        <taxon>Chordata</taxon>
        <taxon>Craniata</taxon>
        <taxon>Vertebrata</taxon>
        <taxon>Euteleostomi</taxon>
        <taxon>Mammalia</taxon>
        <taxon>Eutheria</taxon>
        <taxon>Euarchontoglires</taxon>
        <taxon>Primates</taxon>
        <taxon>Haplorrhini</taxon>
        <taxon>Catarrhini</taxon>
        <taxon>Hominidae</taxon>
        <taxon>Homo</taxon>
    </lineage>
</organism>
<reference key="1">
    <citation type="journal article" date="2004" name="Nat. Genet.">
        <title>Complete sequencing and characterization of 21,243 full-length human cDNAs.</title>
        <authorList>
            <person name="Ota T."/>
            <person name="Suzuki Y."/>
            <person name="Nishikawa T."/>
            <person name="Otsuki T."/>
            <person name="Sugiyama T."/>
            <person name="Irie R."/>
            <person name="Wakamatsu A."/>
            <person name="Hayashi K."/>
            <person name="Sato H."/>
            <person name="Nagai K."/>
            <person name="Kimura K."/>
            <person name="Makita H."/>
            <person name="Sekine M."/>
            <person name="Obayashi M."/>
            <person name="Nishi T."/>
            <person name="Shibahara T."/>
            <person name="Tanaka T."/>
            <person name="Ishii S."/>
            <person name="Yamamoto J."/>
            <person name="Saito K."/>
            <person name="Kawai Y."/>
            <person name="Isono Y."/>
            <person name="Nakamura Y."/>
            <person name="Nagahari K."/>
            <person name="Murakami K."/>
            <person name="Yasuda T."/>
            <person name="Iwayanagi T."/>
            <person name="Wagatsuma M."/>
            <person name="Shiratori A."/>
            <person name="Sudo H."/>
            <person name="Hosoiri T."/>
            <person name="Kaku Y."/>
            <person name="Kodaira H."/>
            <person name="Kondo H."/>
            <person name="Sugawara M."/>
            <person name="Takahashi M."/>
            <person name="Kanda K."/>
            <person name="Yokoi T."/>
            <person name="Furuya T."/>
            <person name="Kikkawa E."/>
            <person name="Omura Y."/>
            <person name="Abe K."/>
            <person name="Kamihara K."/>
            <person name="Katsuta N."/>
            <person name="Sato K."/>
            <person name="Tanikawa M."/>
            <person name="Yamazaki M."/>
            <person name="Ninomiya K."/>
            <person name="Ishibashi T."/>
            <person name="Yamashita H."/>
            <person name="Murakawa K."/>
            <person name="Fujimori K."/>
            <person name="Tanai H."/>
            <person name="Kimata M."/>
            <person name="Watanabe M."/>
            <person name="Hiraoka S."/>
            <person name="Chiba Y."/>
            <person name="Ishida S."/>
            <person name="Ono Y."/>
            <person name="Takiguchi S."/>
            <person name="Watanabe S."/>
            <person name="Yosida M."/>
            <person name="Hotuta T."/>
            <person name="Kusano J."/>
            <person name="Kanehori K."/>
            <person name="Takahashi-Fujii A."/>
            <person name="Hara H."/>
            <person name="Tanase T.-O."/>
            <person name="Nomura Y."/>
            <person name="Togiya S."/>
            <person name="Komai F."/>
            <person name="Hara R."/>
            <person name="Takeuchi K."/>
            <person name="Arita M."/>
            <person name="Imose N."/>
            <person name="Musashino K."/>
            <person name="Yuuki H."/>
            <person name="Oshima A."/>
            <person name="Sasaki N."/>
            <person name="Aotsuka S."/>
            <person name="Yoshikawa Y."/>
            <person name="Matsunawa H."/>
            <person name="Ichihara T."/>
            <person name="Shiohata N."/>
            <person name="Sano S."/>
            <person name="Moriya S."/>
            <person name="Momiyama H."/>
            <person name="Satoh N."/>
            <person name="Takami S."/>
            <person name="Terashima Y."/>
            <person name="Suzuki O."/>
            <person name="Nakagawa S."/>
            <person name="Senoh A."/>
            <person name="Mizoguchi H."/>
            <person name="Goto Y."/>
            <person name="Shimizu F."/>
            <person name="Wakebe H."/>
            <person name="Hishigaki H."/>
            <person name="Watanabe T."/>
            <person name="Sugiyama A."/>
            <person name="Takemoto M."/>
            <person name="Kawakami B."/>
            <person name="Yamazaki M."/>
            <person name="Watanabe K."/>
            <person name="Kumagai A."/>
            <person name="Itakura S."/>
            <person name="Fukuzumi Y."/>
            <person name="Fujimori Y."/>
            <person name="Komiyama M."/>
            <person name="Tashiro H."/>
            <person name="Tanigami A."/>
            <person name="Fujiwara T."/>
            <person name="Ono T."/>
            <person name="Yamada K."/>
            <person name="Fujii Y."/>
            <person name="Ozaki K."/>
            <person name="Hirao M."/>
            <person name="Ohmori Y."/>
            <person name="Kawabata A."/>
            <person name="Hikiji T."/>
            <person name="Kobatake N."/>
            <person name="Inagaki H."/>
            <person name="Ikema Y."/>
            <person name="Okamoto S."/>
            <person name="Okitani R."/>
            <person name="Kawakami T."/>
            <person name="Noguchi S."/>
            <person name="Itoh T."/>
            <person name="Shigeta K."/>
            <person name="Senba T."/>
            <person name="Matsumura K."/>
            <person name="Nakajima Y."/>
            <person name="Mizuno T."/>
            <person name="Morinaga M."/>
            <person name="Sasaki M."/>
            <person name="Togashi T."/>
            <person name="Oyama M."/>
            <person name="Hata H."/>
            <person name="Watanabe M."/>
            <person name="Komatsu T."/>
            <person name="Mizushima-Sugano J."/>
            <person name="Satoh T."/>
            <person name="Shirai Y."/>
            <person name="Takahashi Y."/>
            <person name="Nakagawa K."/>
            <person name="Okumura K."/>
            <person name="Nagase T."/>
            <person name="Nomura N."/>
            <person name="Kikuchi H."/>
            <person name="Masuho Y."/>
            <person name="Yamashita R."/>
            <person name="Nakai K."/>
            <person name="Yada T."/>
            <person name="Nakamura Y."/>
            <person name="Ohara O."/>
            <person name="Isogai T."/>
            <person name="Sugano S."/>
        </authorList>
    </citation>
    <scope>NUCLEOTIDE SEQUENCE [LARGE SCALE MRNA] (ISOFORMS 2 AND 3)</scope>
    <scope>VARIANT ASP-22</scope>
    <source>
        <tissue>Brain</tissue>
        <tissue>Thymus</tissue>
    </source>
</reference>
<reference key="2">
    <citation type="journal article" date="2004" name="Nature">
        <title>The DNA sequence and biology of human chromosome 19.</title>
        <authorList>
            <person name="Grimwood J."/>
            <person name="Gordon L.A."/>
            <person name="Olsen A.S."/>
            <person name="Terry A."/>
            <person name="Schmutz J."/>
            <person name="Lamerdin J.E."/>
            <person name="Hellsten U."/>
            <person name="Goodstein D."/>
            <person name="Couronne O."/>
            <person name="Tran-Gyamfi M."/>
            <person name="Aerts A."/>
            <person name="Altherr M."/>
            <person name="Ashworth L."/>
            <person name="Bajorek E."/>
            <person name="Black S."/>
            <person name="Branscomb E."/>
            <person name="Caenepeel S."/>
            <person name="Carrano A.V."/>
            <person name="Caoile C."/>
            <person name="Chan Y.M."/>
            <person name="Christensen M."/>
            <person name="Cleland C.A."/>
            <person name="Copeland A."/>
            <person name="Dalin E."/>
            <person name="Dehal P."/>
            <person name="Denys M."/>
            <person name="Detter J.C."/>
            <person name="Escobar J."/>
            <person name="Flowers D."/>
            <person name="Fotopulos D."/>
            <person name="Garcia C."/>
            <person name="Georgescu A.M."/>
            <person name="Glavina T."/>
            <person name="Gomez M."/>
            <person name="Gonzales E."/>
            <person name="Groza M."/>
            <person name="Hammon N."/>
            <person name="Hawkins T."/>
            <person name="Haydu L."/>
            <person name="Ho I."/>
            <person name="Huang W."/>
            <person name="Israni S."/>
            <person name="Jett J."/>
            <person name="Kadner K."/>
            <person name="Kimball H."/>
            <person name="Kobayashi A."/>
            <person name="Larionov V."/>
            <person name="Leem S.-H."/>
            <person name="Lopez F."/>
            <person name="Lou Y."/>
            <person name="Lowry S."/>
            <person name="Malfatti S."/>
            <person name="Martinez D."/>
            <person name="McCready P.M."/>
            <person name="Medina C."/>
            <person name="Morgan J."/>
            <person name="Nelson K."/>
            <person name="Nolan M."/>
            <person name="Ovcharenko I."/>
            <person name="Pitluck S."/>
            <person name="Pollard M."/>
            <person name="Popkie A.P."/>
            <person name="Predki P."/>
            <person name="Quan G."/>
            <person name="Ramirez L."/>
            <person name="Rash S."/>
            <person name="Retterer J."/>
            <person name="Rodriguez A."/>
            <person name="Rogers S."/>
            <person name="Salamov A."/>
            <person name="Salazar A."/>
            <person name="She X."/>
            <person name="Smith D."/>
            <person name="Slezak T."/>
            <person name="Solovyev V."/>
            <person name="Thayer N."/>
            <person name="Tice H."/>
            <person name="Tsai M."/>
            <person name="Ustaszewska A."/>
            <person name="Vo N."/>
            <person name="Wagner M."/>
            <person name="Wheeler J."/>
            <person name="Wu K."/>
            <person name="Xie G."/>
            <person name="Yang J."/>
            <person name="Dubchak I."/>
            <person name="Furey T.S."/>
            <person name="DeJong P."/>
            <person name="Dickson M."/>
            <person name="Gordon D."/>
            <person name="Eichler E.E."/>
            <person name="Pennacchio L.A."/>
            <person name="Richardson P."/>
            <person name="Stubbs L."/>
            <person name="Rokhsar D.S."/>
            <person name="Myers R.M."/>
            <person name="Rubin E.M."/>
            <person name="Lucas S.M."/>
        </authorList>
    </citation>
    <scope>NUCLEOTIDE SEQUENCE [LARGE SCALE GENOMIC DNA]</scope>
</reference>
<reference key="3">
    <citation type="submission" date="2005-07" db="EMBL/GenBank/DDBJ databases">
        <authorList>
            <person name="Mural R.J."/>
            <person name="Istrail S."/>
            <person name="Sutton G.G."/>
            <person name="Florea L."/>
            <person name="Halpern A.L."/>
            <person name="Mobarry C.M."/>
            <person name="Lippert R."/>
            <person name="Walenz B."/>
            <person name="Shatkay H."/>
            <person name="Dew I."/>
            <person name="Miller J.R."/>
            <person name="Flanigan M.J."/>
            <person name="Edwards N.J."/>
            <person name="Bolanos R."/>
            <person name="Fasulo D."/>
            <person name="Halldorsson B.V."/>
            <person name="Hannenhalli S."/>
            <person name="Turner R."/>
            <person name="Yooseph S."/>
            <person name="Lu F."/>
            <person name="Nusskern D.R."/>
            <person name="Shue B.C."/>
            <person name="Zheng X.H."/>
            <person name="Zhong F."/>
            <person name="Delcher A.L."/>
            <person name="Huson D.H."/>
            <person name="Kravitz S.A."/>
            <person name="Mouchard L."/>
            <person name="Reinert K."/>
            <person name="Remington K.A."/>
            <person name="Clark A.G."/>
            <person name="Waterman M.S."/>
            <person name="Eichler E.E."/>
            <person name="Adams M.D."/>
            <person name="Hunkapiller M.W."/>
            <person name="Myers E.W."/>
            <person name="Venter J.C."/>
        </authorList>
    </citation>
    <scope>NUCLEOTIDE SEQUENCE [LARGE SCALE GENOMIC DNA]</scope>
</reference>
<reference key="4">
    <citation type="journal article" date="2004" name="Genome Res.">
        <title>The status, quality, and expansion of the NIH full-length cDNA project: the Mammalian Gene Collection (MGC).</title>
        <authorList>
            <consortium name="The MGC Project Team"/>
        </authorList>
    </citation>
    <scope>NUCLEOTIDE SEQUENCE [LARGE SCALE MRNA] (ISOFORM 1)</scope>
    <scope>VARIANT ASP-22</scope>
    <source>
        <tissue>Testis</tissue>
    </source>
</reference>
<reference key="5">
    <citation type="journal article" date="1995" name="Genomics">
        <title>Isolation and fine mapping of 16 novel human zinc finger-encoding cDNAs identify putative candidate genes for developmental and malignant disorders.</title>
        <authorList>
            <person name="Tommerup N."/>
            <person name="Vissing H."/>
        </authorList>
    </citation>
    <scope>NUCLEOTIDE SEQUENCE [MRNA] OF 166-658 (ISOFORM 1)</scope>
    <source>
        <tissue>Insulinoma</tissue>
    </source>
</reference>
<reference key="6">
    <citation type="journal article" date="2011" name="BMC Biol.">
        <title>Identification and characterization of a set of conserved and new regulators of cytoskeletal organisation, cell morphology and migration.</title>
        <authorList>
            <person name="Bai S.W."/>
            <person name="Herrera-Abreu M.T."/>
            <person name="Rohn J.L."/>
            <person name="Racine V."/>
            <person name="Tajadura V."/>
            <person name="Suryavanshi N."/>
            <person name="Bechtel S."/>
            <person name="Wiemann S."/>
            <person name="Baum B."/>
            <person name="Ridley A.J."/>
        </authorList>
    </citation>
    <scope>FUNCTION</scope>
</reference>
<name>ZN135_HUMAN</name>